<protein>
    <recommendedName>
        <fullName evidence="1">Protein GrpE</fullName>
    </recommendedName>
    <alternativeName>
        <fullName evidence="1">HSP-70 cofactor</fullName>
    </alternativeName>
</protein>
<feature type="chain" id="PRO_1000137621" description="Protein GrpE">
    <location>
        <begin position="1"/>
        <end position="200"/>
    </location>
</feature>
<feature type="region of interest" description="Disordered" evidence="2">
    <location>
        <begin position="1"/>
        <end position="25"/>
    </location>
</feature>
<feature type="compositionally biased region" description="Polar residues" evidence="2">
    <location>
        <begin position="1"/>
        <end position="11"/>
    </location>
</feature>
<reference key="1">
    <citation type="submission" date="2007-10" db="EMBL/GenBank/DDBJ databases">
        <title>Complete sequence of Shewanella pealeana ATCC 700345.</title>
        <authorList>
            <consortium name="US DOE Joint Genome Institute"/>
            <person name="Copeland A."/>
            <person name="Lucas S."/>
            <person name="Lapidus A."/>
            <person name="Barry K."/>
            <person name="Glavina del Rio T."/>
            <person name="Dalin E."/>
            <person name="Tice H."/>
            <person name="Pitluck S."/>
            <person name="Chertkov O."/>
            <person name="Brettin T."/>
            <person name="Bruce D."/>
            <person name="Detter J.C."/>
            <person name="Han C."/>
            <person name="Schmutz J."/>
            <person name="Larimer F."/>
            <person name="Land M."/>
            <person name="Hauser L."/>
            <person name="Kyrpides N."/>
            <person name="Kim E."/>
            <person name="Zhao J.-S.Z."/>
            <person name="Manno D."/>
            <person name="Hawari J."/>
            <person name="Richardson P."/>
        </authorList>
    </citation>
    <scope>NUCLEOTIDE SEQUENCE [LARGE SCALE GENOMIC DNA]</scope>
    <source>
        <strain>ATCC 700345 / ANG-SQ1</strain>
    </source>
</reference>
<evidence type="ECO:0000255" key="1">
    <source>
        <dbReference type="HAMAP-Rule" id="MF_01151"/>
    </source>
</evidence>
<evidence type="ECO:0000256" key="2">
    <source>
        <dbReference type="SAM" id="MobiDB-lite"/>
    </source>
</evidence>
<gene>
    <name evidence="1" type="primary">grpE</name>
    <name type="ordered locus">Spea_2992</name>
</gene>
<accession>A8H6X2</accession>
<proteinExistence type="inferred from homology"/>
<keyword id="KW-0143">Chaperone</keyword>
<keyword id="KW-0963">Cytoplasm</keyword>
<keyword id="KW-1185">Reference proteome</keyword>
<keyword id="KW-0346">Stress response</keyword>
<sequence length="200" mass="22209">MSNQTNKAQDNQVEEIVEGELLNENATEATDEASLMDELTQANFRVEELEKALQEAEAKVDAQKDSVIRAAAEVDNIRRRSAMDVEKAHKFALEKFINELLPVLDNMERALQGTDAEAEATKAIYEGVELTAKSFMSTVEKFGLVQVDPQGDTFNPELHQAIGMQPSADFPANTVMMVMQKGYTLNERLLRPAMVMVSQG</sequence>
<organism>
    <name type="scientific">Shewanella pealeana (strain ATCC 700345 / ANG-SQ1)</name>
    <dbReference type="NCBI Taxonomy" id="398579"/>
    <lineage>
        <taxon>Bacteria</taxon>
        <taxon>Pseudomonadati</taxon>
        <taxon>Pseudomonadota</taxon>
        <taxon>Gammaproteobacteria</taxon>
        <taxon>Alteromonadales</taxon>
        <taxon>Shewanellaceae</taxon>
        <taxon>Shewanella</taxon>
    </lineage>
</organism>
<name>GRPE_SHEPA</name>
<comment type="function">
    <text evidence="1">Participates actively in the response to hyperosmotic and heat shock by preventing the aggregation of stress-denatured proteins, in association with DnaK and GrpE. It is the nucleotide exchange factor for DnaK and may function as a thermosensor. Unfolded proteins bind initially to DnaJ; upon interaction with the DnaJ-bound protein, DnaK hydrolyzes its bound ATP, resulting in the formation of a stable complex. GrpE releases ADP from DnaK; ATP binding to DnaK triggers the release of the substrate protein, thus completing the reaction cycle. Several rounds of ATP-dependent interactions between DnaJ, DnaK and GrpE are required for fully efficient folding.</text>
</comment>
<comment type="subunit">
    <text evidence="1">Homodimer.</text>
</comment>
<comment type="subcellular location">
    <subcellularLocation>
        <location evidence="1">Cytoplasm</location>
    </subcellularLocation>
</comment>
<comment type="similarity">
    <text evidence="1">Belongs to the GrpE family.</text>
</comment>
<dbReference type="EMBL" id="CP000851">
    <property type="protein sequence ID" value="ABV88309.1"/>
    <property type="molecule type" value="Genomic_DNA"/>
</dbReference>
<dbReference type="RefSeq" id="WP_012156213.1">
    <property type="nucleotide sequence ID" value="NC_009901.1"/>
</dbReference>
<dbReference type="SMR" id="A8H6X2"/>
<dbReference type="STRING" id="398579.Spea_2992"/>
<dbReference type="KEGG" id="spl:Spea_2992"/>
<dbReference type="eggNOG" id="COG0576">
    <property type="taxonomic scope" value="Bacteria"/>
</dbReference>
<dbReference type="HOGENOM" id="CLU_057217_6_0_6"/>
<dbReference type="OrthoDB" id="9789811at2"/>
<dbReference type="Proteomes" id="UP000002608">
    <property type="component" value="Chromosome"/>
</dbReference>
<dbReference type="GO" id="GO:0005829">
    <property type="term" value="C:cytosol"/>
    <property type="evidence" value="ECO:0007669"/>
    <property type="project" value="TreeGrafter"/>
</dbReference>
<dbReference type="GO" id="GO:0000774">
    <property type="term" value="F:adenyl-nucleotide exchange factor activity"/>
    <property type="evidence" value="ECO:0007669"/>
    <property type="project" value="InterPro"/>
</dbReference>
<dbReference type="GO" id="GO:0042803">
    <property type="term" value="F:protein homodimerization activity"/>
    <property type="evidence" value="ECO:0007669"/>
    <property type="project" value="InterPro"/>
</dbReference>
<dbReference type="GO" id="GO:0051087">
    <property type="term" value="F:protein-folding chaperone binding"/>
    <property type="evidence" value="ECO:0007669"/>
    <property type="project" value="InterPro"/>
</dbReference>
<dbReference type="GO" id="GO:0051082">
    <property type="term" value="F:unfolded protein binding"/>
    <property type="evidence" value="ECO:0007669"/>
    <property type="project" value="TreeGrafter"/>
</dbReference>
<dbReference type="GO" id="GO:0006457">
    <property type="term" value="P:protein folding"/>
    <property type="evidence" value="ECO:0007669"/>
    <property type="project" value="InterPro"/>
</dbReference>
<dbReference type="CDD" id="cd00446">
    <property type="entry name" value="GrpE"/>
    <property type="match status" value="1"/>
</dbReference>
<dbReference type="FunFam" id="2.30.22.10:FF:000001">
    <property type="entry name" value="Protein GrpE"/>
    <property type="match status" value="1"/>
</dbReference>
<dbReference type="Gene3D" id="3.90.20.20">
    <property type="match status" value="1"/>
</dbReference>
<dbReference type="Gene3D" id="2.30.22.10">
    <property type="entry name" value="Head domain of nucleotide exchange factor GrpE"/>
    <property type="match status" value="1"/>
</dbReference>
<dbReference type="HAMAP" id="MF_01151">
    <property type="entry name" value="GrpE"/>
    <property type="match status" value="1"/>
</dbReference>
<dbReference type="InterPro" id="IPR000740">
    <property type="entry name" value="GrpE"/>
</dbReference>
<dbReference type="InterPro" id="IPR013805">
    <property type="entry name" value="GrpE_coiled_coil"/>
</dbReference>
<dbReference type="InterPro" id="IPR009012">
    <property type="entry name" value="GrpE_head"/>
</dbReference>
<dbReference type="NCBIfam" id="NF010737">
    <property type="entry name" value="PRK14139.1"/>
    <property type="match status" value="1"/>
</dbReference>
<dbReference type="NCBIfam" id="NF010738">
    <property type="entry name" value="PRK14140.1"/>
    <property type="match status" value="1"/>
</dbReference>
<dbReference type="NCBIfam" id="NF010748">
    <property type="entry name" value="PRK14150.1"/>
    <property type="match status" value="1"/>
</dbReference>
<dbReference type="PANTHER" id="PTHR21237">
    <property type="entry name" value="GRPE PROTEIN"/>
    <property type="match status" value="1"/>
</dbReference>
<dbReference type="PANTHER" id="PTHR21237:SF23">
    <property type="entry name" value="GRPE PROTEIN HOMOLOG, MITOCHONDRIAL"/>
    <property type="match status" value="1"/>
</dbReference>
<dbReference type="Pfam" id="PF01025">
    <property type="entry name" value="GrpE"/>
    <property type="match status" value="1"/>
</dbReference>
<dbReference type="PRINTS" id="PR00773">
    <property type="entry name" value="GRPEPROTEIN"/>
</dbReference>
<dbReference type="SUPFAM" id="SSF58014">
    <property type="entry name" value="Coiled-coil domain of nucleotide exchange factor GrpE"/>
    <property type="match status" value="1"/>
</dbReference>
<dbReference type="SUPFAM" id="SSF51064">
    <property type="entry name" value="Head domain of nucleotide exchange factor GrpE"/>
    <property type="match status" value="1"/>
</dbReference>
<dbReference type="PROSITE" id="PS01071">
    <property type="entry name" value="GRPE"/>
    <property type="match status" value="1"/>
</dbReference>